<organism>
    <name type="scientific">Sulfurimonas denitrificans (strain ATCC 33889 / DSM 1251)</name>
    <name type="common">Thiomicrospira denitrificans (strain ATCC 33889 / DSM 1251)</name>
    <dbReference type="NCBI Taxonomy" id="326298"/>
    <lineage>
        <taxon>Bacteria</taxon>
        <taxon>Pseudomonadati</taxon>
        <taxon>Campylobacterota</taxon>
        <taxon>Epsilonproteobacteria</taxon>
        <taxon>Campylobacterales</taxon>
        <taxon>Sulfurimonadaceae</taxon>
        <taxon>Sulfurimonas</taxon>
    </lineage>
</organism>
<proteinExistence type="inferred from homology"/>
<reference key="1">
    <citation type="journal article" date="2008" name="Appl. Environ. Microbiol.">
        <title>Genome of the epsilonproteobacterial chemolithoautotroph Sulfurimonas denitrificans.</title>
        <authorList>
            <person name="Sievert S.M."/>
            <person name="Scott K.M."/>
            <person name="Klotz M.G."/>
            <person name="Chain P.S.G."/>
            <person name="Hauser L.J."/>
            <person name="Hemp J."/>
            <person name="Huegler M."/>
            <person name="Land M."/>
            <person name="Lapidus A."/>
            <person name="Larimer F.W."/>
            <person name="Lucas S."/>
            <person name="Malfatti S.A."/>
            <person name="Meyer F."/>
            <person name="Paulsen I.T."/>
            <person name="Ren Q."/>
            <person name="Simon J."/>
            <person name="Bailey K."/>
            <person name="Diaz E."/>
            <person name="Fitzpatrick K.A."/>
            <person name="Glover B."/>
            <person name="Gwatney N."/>
            <person name="Korajkic A."/>
            <person name="Long A."/>
            <person name="Mobberley J.M."/>
            <person name="Pantry S.N."/>
            <person name="Pazder G."/>
            <person name="Peterson S."/>
            <person name="Quintanilla J.D."/>
            <person name="Sprinkle R."/>
            <person name="Stephens J."/>
            <person name="Thomas P."/>
            <person name="Vaughn R."/>
            <person name="Weber M.J."/>
            <person name="Wooten L.L."/>
        </authorList>
    </citation>
    <scope>NUCLEOTIDE SEQUENCE [LARGE SCALE GENOMIC DNA]</scope>
    <source>
        <strain>ATCC 33889 / DSM 1251</strain>
    </source>
</reference>
<protein>
    <recommendedName>
        <fullName evidence="1">Small ribosomal subunit protein uS13</fullName>
    </recommendedName>
    <alternativeName>
        <fullName evidence="3">30S ribosomal protein S13</fullName>
    </alternativeName>
</protein>
<sequence length="120" mass="13484">MARISGVDLPKKKRIEYGLTYVYGIGLHASRKILDATGIDYNKRVYELNEDDIAAITKEIRASHVVEGDLRKQVAMDIKALMDLGSYRGLRHRRGLPCRGQKTKTNARTRKGKRKTVGAA</sequence>
<keyword id="KW-1185">Reference proteome</keyword>
<keyword id="KW-0687">Ribonucleoprotein</keyword>
<keyword id="KW-0689">Ribosomal protein</keyword>
<keyword id="KW-0694">RNA-binding</keyword>
<keyword id="KW-0699">rRNA-binding</keyword>
<keyword id="KW-0820">tRNA-binding</keyword>
<evidence type="ECO:0000255" key="1">
    <source>
        <dbReference type="HAMAP-Rule" id="MF_01315"/>
    </source>
</evidence>
<evidence type="ECO:0000256" key="2">
    <source>
        <dbReference type="SAM" id="MobiDB-lite"/>
    </source>
</evidence>
<evidence type="ECO:0000305" key="3"/>
<name>RS13_SULDN</name>
<dbReference type="EMBL" id="CP000153">
    <property type="protein sequence ID" value="ABB43605.1"/>
    <property type="molecule type" value="Genomic_DNA"/>
</dbReference>
<dbReference type="RefSeq" id="WP_011371959.1">
    <property type="nucleotide sequence ID" value="NC_007575.1"/>
</dbReference>
<dbReference type="SMR" id="Q30TS6"/>
<dbReference type="STRING" id="326298.Suden_0324"/>
<dbReference type="KEGG" id="tdn:Suden_0324"/>
<dbReference type="eggNOG" id="COG0099">
    <property type="taxonomic scope" value="Bacteria"/>
</dbReference>
<dbReference type="HOGENOM" id="CLU_103849_1_2_7"/>
<dbReference type="OrthoDB" id="9803610at2"/>
<dbReference type="Proteomes" id="UP000002714">
    <property type="component" value="Chromosome"/>
</dbReference>
<dbReference type="GO" id="GO:0005829">
    <property type="term" value="C:cytosol"/>
    <property type="evidence" value="ECO:0007669"/>
    <property type="project" value="TreeGrafter"/>
</dbReference>
<dbReference type="GO" id="GO:0015935">
    <property type="term" value="C:small ribosomal subunit"/>
    <property type="evidence" value="ECO:0007669"/>
    <property type="project" value="TreeGrafter"/>
</dbReference>
<dbReference type="GO" id="GO:0019843">
    <property type="term" value="F:rRNA binding"/>
    <property type="evidence" value="ECO:0007669"/>
    <property type="project" value="UniProtKB-UniRule"/>
</dbReference>
<dbReference type="GO" id="GO:0003735">
    <property type="term" value="F:structural constituent of ribosome"/>
    <property type="evidence" value="ECO:0007669"/>
    <property type="project" value="InterPro"/>
</dbReference>
<dbReference type="GO" id="GO:0000049">
    <property type="term" value="F:tRNA binding"/>
    <property type="evidence" value="ECO:0007669"/>
    <property type="project" value="UniProtKB-UniRule"/>
</dbReference>
<dbReference type="GO" id="GO:0006412">
    <property type="term" value="P:translation"/>
    <property type="evidence" value="ECO:0007669"/>
    <property type="project" value="UniProtKB-UniRule"/>
</dbReference>
<dbReference type="FunFam" id="1.10.8.50:FF:000001">
    <property type="entry name" value="30S ribosomal protein S13"/>
    <property type="match status" value="1"/>
</dbReference>
<dbReference type="FunFam" id="4.10.910.10:FF:000001">
    <property type="entry name" value="30S ribosomal protein S13"/>
    <property type="match status" value="1"/>
</dbReference>
<dbReference type="Gene3D" id="1.10.8.50">
    <property type="match status" value="1"/>
</dbReference>
<dbReference type="Gene3D" id="4.10.910.10">
    <property type="entry name" value="30s ribosomal protein s13, domain 2"/>
    <property type="match status" value="1"/>
</dbReference>
<dbReference type="HAMAP" id="MF_01315">
    <property type="entry name" value="Ribosomal_uS13"/>
    <property type="match status" value="1"/>
</dbReference>
<dbReference type="InterPro" id="IPR027437">
    <property type="entry name" value="Rbsml_uS13_C"/>
</dbReference>
<dbReference type="InterPro" id="IPR001892">
    <property type="entry name" value="Ribosomal_uS13"/>
</dbReference>
<dbReference type="InterPro" id="IPR010979">
    <property type="entry name" value="Ribosomal_uS13-like_H2TH"/>
</dbReference>
<dbReference type="InterPro" id="IPR019980">
    <property type="entry name" value="Ribosomal_uS13_bac-type"/>
</dbReference>
<dbReference type="InterPro" id="IPR018269">
    <property type="entry name" value="Ribosomal_uS13_CS"/>
</dbReference>
<dbReference type="NCBIfam" id="TIGR03631">
    <property type="entry name" value="uS13_bact"/>
    <property type="match status" value="1"/>
</dbReference>
<dbReference type="PANTHER" id="PTHR10871">
    <property type="entry name" value="30S RIBOSOMAL PROTEIN S13/40S RIBOSOMAL PROTEIN S18"/>
    <property type="match status" value="1"/>
</dbReference>
<dbReference type="PANTHER" id="PTHR10871:SF1">
    <property type="entry name" value="SMALL RIBOSOMAL SUBUNIT PROTEIN US13M"/>
    <property type="match status" value="1"/>
</dbReference>
<dbReference type="Pfam" id="PF00416">
    <property type="entry name" value="Ribosomal_S13"/>
    <property type="match status" value="1"/>
</dbReference>
<dbReference type="PIRSF" id="PIRSF002134">
    <property type="entry name" value="Ribosomal_S13"/>
    <property type="match status" value="1"/>
</dbReference>
<dbReference type="SUPFAM" id="SSF46946">
    <property type="entry name" value="S13-like H2TH domain"/>
    <property type="match status" value="1"/>
</dbReference>
<dbReference type="PROSITE" id="PS00646">
    <property type="entry name" value="RIBOSOMAL_S13_1"/>
    <property type="match status" value="1"/>
</dbReference>
<dbReference type="PROSITE" id="PS50159">
    <property type="entry name" value="RIBOSOMAL_S13_2"/>
    <property type="match status" value="1"/>
</dbReference>
<accession>Q30TS6</accession>
<feature type="chain" id="PRO_0000230577" description="Small ribosomal subunit protein uS13">
    <location>
        <begin position="1"/>
        <end position="120"/>
    </location>
</feature>
<feature type="region of interest" description="Disordered" evidence="2">
    <location>
        <begin position="93"/>
        <end position="120"/>
    </location>
</feature>
<gene>
    <name evidence="1" type="primary">rpsM</name>
    <name type="ordered locus">Suden_0324</name>
</gene>
<comment type="function">
    <text evidence="1">Located at the top of the head of the 30S subunit, it contacts several helices of the 16S rRNA. In the 70S ribosome it contacts the 23S rRNA (bridge B1a) and protein L5 of the 50S subunit (bridge B1b), connecting the 2 subunits; these bridges are implicated in subunit movement. Contacts the tRNAs in the A and P-sites.</text>
</comment>
<comment type="subunit">
    <text evidence="1">Part of the 30S ribosomal subunit. Forms a loose heterodimer with protein S19. Forms two bridges to the 50S subunit in the 70S ribosome.</text>
</comment>
<comment type="similarity">
    <text evidence="1">Belongs to the universal ribosomal protein uS13 family.</text>
</comment>